<accession>Q64YS9</accession>
<gene>
    <name evidence="1" type="primary">metAA</name>
    <name type="ordered locus">BF0598</name>
</gene>
<feature type="chain" id="PRO_0000199738" description="Homoserine O-acetyltransferase">
    <location>
        <begin position="1"/>
        <end position="305"/>
    </location>
</feature>
<feature type="active site" description="Acyl-thioester intermediate" evidence="1">
    <location>
        <position position="142"/>
    </location>
</feature>
<feature type="active site" description="Proton acceptor" evidence="1">
    <location>
        <position position="235"/>
    </location>
</feature>
<feature type="active site" evidence="1">
    <location>
        <position position="237"/>
    </location>
</feature>
<feature type="binding site" evidence="1">
    <location>
        <position position="163"/>
    </location>
    <ligand>
        <name>substrate</name>
    </ligand>
</feature>
<feature type="binding site" evidence="1">
    <location>
        <position position="192"/>
    </location>
    <ligand>
        <name>substrate</name>
    </ligand>
</feature>
<feature type="binding site" evidence="1">
    <location>
        <position position="249"/>
    </location>
    <ligand>
        <name>substrate</name>
    </ligand>
</feature>
<feature type="site" description="Important for acyl-CoA specificity" evidence="1">
    <location>
        <position position="111"/>
    </location>
</feature>
<feature type="site" description="Important for substrate specificity" evidence="1">
    <location>
        <position position="192"/>
    </location>
</feature>
<dbReference type="EC" id="2.3.1.31" evidence="1"/>
<dbReference type="EMBL" id="AP006841">
    <property type="protein sequence ID" value="BAD47347.1"/>
    <property type="molecule type" value="Genomic_DNA"/>
</dbReference>
<dbReference type="RefSeq" id="YP_097881.1">
    <property type="nucleotide sequence ID" value="NC_006347.1"/>
</dbReference>
<dbReference type="SMR" id="Q64YS9"/>
<dbReference type="STRING" id="295405.BF0598"/>
<dbReference type="KEGG" id="bfr:BF0598"/>
<dbReference type="PATRIC" id="fig|295405.11.peg.617"/>
<dbReference type="HOGENOM" id="CLU_057851_0_1_10"/>
<dbReference type="OrthoDB" id="9772423at2"/>
<dbReference type="UniPathway" id="UPA00051">
    <property type="reaction ID" value="UER00074"/>
</dbReference>
<dbReference type="Proteomes" id="UP000002197">
    <property type="component" value="Chromosome"/>
</dbReference>
<dbReference type="GO" id="GO:0005737">
    <property type="term" value="C:cytoplasm"/>
    <property type="evidence" value="ECO:0007669"/>
    <property type="project" value="UniProtKB-SubCell"/>
</dbReference>
<dbReference type="GO" id="GO:0004414">
    <property type="term" value="F:homoserine O-acetyltransferase activity"/>
    <property type="evidence" value="ECO:0007669"/>
    <property type="project" value="UniProtKB-EC"/>
</dbReference>
<dbReference type="GO" id="GO:0008899">
    <property type="term" value="F:homoserine O-succinyltransferase activity"/>
    <property type="evidence" value="ECO:0007669"/>
    <property type="project" value="UniProtKB-UniRule"/>
</dbReference>
<dbReference type="GO" id="GO:0019281">
    <property type="term" value="P:L-methionine biosynthetic process from homoserine via O-succinyl-L-homoserine and cystathionine"/>
    <property type="evidence" value="ECO:0007669"/>
    <property type="project" value="InterPro"/>
</dbReference>
<dbReference type="CDD" id="cd03131">
    <property type="entry name" value="GATase1_HTS"/>
    <property type="match status" value="1"/>
</dbReference>
<dbReference type="FunFam" id="3.40.50.880:FF:000004">
    <property type="entry name" value="Homoserine O-succinyltransferase"/>
    <property type="match status" value="1"/>
</dbReference>
<dbReference type="Gene3D" id="3.40.50.880">
    <property type="match status" value="1"/>
</dbReference>
<dbReference type="HAMAP" id="MF_00295">
    <property type="entry name" value="MetA_acyltransf"/>
    <property type="match status" value="1"/>
</dbReference>
<dbReference type="InterPro" id="IPR029062">
    <property type="entry name" value="Class_I_gatase-like"/>
</dbReference>
<dbReference type="InterPro" id="IPR005697">
    <property type="entry name" value="HST_MetA"/>
</dbReference>
<dbReference type="InterPro" id="IPR033752">
    <property type="entry name" value="MetA_family"/>
</dbReference>
<dbReference type="NCBIfam" id="TIGR01001">
    <property type="entry name" value="metA"/>
    <property type="match status" value="1"/>
</dbReference>
<dbReference type="PANTHER" id="PTHR20919">
    <property type="entry name" value="HOMOSERINE O-SUCCINYLTRANSFERASE"/>
    <property type="match status" value="1"/>
</dbReference>
<dbReference type="PANTHER" id="PTHR20919:SF0">
    <property type="entry name" value="HOMOSERINE O-SUCCINYLTRANSFERASE"/>
    <property type="match status" value="1"/>
</dbReference>
<dbReference type="Pfam" id="PF04204">
    <property type="entry name" value="HTS"/>
    <property type="match status" value="1"/>
</dbReference>
<dbReference type="PIRSF" id="PIRSF000450">
    <property type="entry name" value="H_ser_succinyltr"/>
    <property type="match status" value="1"/>
</dbReference>
<dbReference type="SUPFAM" id="SSF52317">
    <property type="entry name" value="Class I glutamine amidotransferase-like"/>
    <property type="match status" value="1"/>
</dbReference>
<sequence>MPLNLPDKLPAIELLKEENIFVIDNSRATQQDIRPLRIVILNLMPLKITTETDLVRLLSNTPLQVEISFMKIKSHTSKNTPIEHMKTFYTDFDKMREDRYDGMIITGAPVEQMDFEEVNYWDEITEIFDWARTHVTSTLYICWAAQAGLYHHYGIPKYALDKKMFGIFKHRTLLPLHPIFRGFDDEFYVPHSRHTEVRKEDILKVPELTLLSESDDSGVYMVVARGGREFFVTGHSEYSPLTLDTEYRRDVSKGLPIEIPRNYYVNDDPDKGPLVRWRGHANLLFSNWLNYFVYQETPYNIEDIR</sequence>
<comment type="function">
    <text evidence="1">Transfers an acetyl group from acetyl-CoA to L-homoserine, forming acetyl-L-homoserine.</text>
</comment>
<comment type="catalytic activity">
    <reaction evidence="1">
        <text>L-homoserine + acetyl-CoA = O-acetyl-L-homoserine + CoA</text>
        <dbReference type="Rhea" id="RHEA:13701"/>
        <dbReference type="ChEBI" id="CHEBI:57287"/>
        <dbReference type="ChEBI" id="CHEBI:57288"/>
        <dbReference type="ChEBI" id="CHEBI:57476"/>
        <dbReference type="ChEBI" id="CHEBI:57716"/>
        <dbReference type="EC" id="2.3.1.31"/>
    </reaction>
</comment>
<comment type="pathway">
    <text evidence="1">Amino-acid biosynthesis; L-methionine biosynthesis via de novo pathway; O-acetyl-L-homoserine from L-homoserine: step 1/1.</text>
</comment>
<comment type="subcellular location">
    <subcellularLocation>
        <location evidence="1">Cytoplasm</location>
    </subcellularLocation>
</comment>
<comment type="similarity">
    <text evidence="1">Belongs to the MetA family.</text>
</comment>
<protein>
    <recommendedName>
        <fullName evidence="1">Homoserine O-acetyltransferase</fullName>
        <shortName evidence="1">HAT</shortName>
        <ecNumber evidence="1">2.3.1.31</ecNumber>
    </recommendedName>
    <alternativeName>
        <fullName evidence="1">Homoserine transacetylase</fullName>
        <shortName evidence="1">HTA</shortName>
    </alternativeName>
</protein>
<reference key="1">
    <citation type="journal article" date="2004" name="Proc. Natl. Acad. Sci. U.S.A.">
        <title>Genomic analysis of Bacteroides fragilis reveals extensive DNA inversions regulating cell surface adaptation.</title>
        <authorList>
            <person name="Kuwahara T."/>
            <person name="Yamashita A."/>
            <person name="Hirakawa H."/>
            <person name="Nakayama H."/>
            <person name="Toh H."/>
            <person name="Okada N."/>
            <person name="Kuhara S."/>
            <person name="Hattori M."/>
            <person name="Hayashi T."/>
            <person name="Ohnishi Y."/>
        </authorList>
    </citation>
    <scope>NUCLEOTIDE SEQUENCE [LARGE SCALE GENOMIC DNA]</scope>
    <source>
        <strain>YCH46</strain>
    </source>
</reference>
<organism>
    <name type="scientific">Bacteroides fragilis (strain YCH46)</name>
    <dbReference type="NCBI Taxonomy" id="295405"/>
    <lineage>
        <taxon>Bacteria</taxon>
        <taxon>Pseudomonadati</taxon>
        <taxon>Bacteroidota</taxon>
        <taxon>Bacteroidia</taxon>
        <taxon>Bacteroidales</taxon>
        <taxon>Bacteroidaceae</taxon>
        <taxon>Bacteroides</taxon>
    </lineage>
</organism>
<proteinExistence type="inferred from homology"/>
<name>METAA_BACFR</name>
<keyword id="KW-0012">Acyltransferase</keyword>
<keyword id="KW-0028">Amino-acid biosynthesis</keyword>
<keyword id="KW-0963">Cytoplasm</keyword>
<keyword id="KW-0486">Methionine biosynthesis</keyword>
<keyword id="KW-0808">Transferase</keyword>
<evidence type="ECO:0000255" key="1">
    <source>
        <dbReference type="HAMAP-Rule" id="MF_00295"/>
    </source>
</evidence>